<sequence length="228" mass="26110">MFHGIPATPGVGALPCSVAAPGNKPELYEEVKLYKNAREREKYDNMAELFAVVKTMQALEKAYIKDCVTPNEYTAACSRLLVQYKAAFRQVQGSEISSIDEFCRKFRLDCPLAMERIKEDRPITIKDDKGNLNRCIADVVSLFITVMDKLRLEIRAMDEIQPDLRELMETMHRMSHLPPDFEGRQTVSQWLQTLSGMSASDELDDSQVRQMLFDLESAYNAFNRFLHS</sequence>
<organism>
    <name type="scientific">Rattus norvegicus</name>
    <name type="common">Rat</name>
    <dbReference type="NCBI Taxonomy" id="10116"/>
    <lineage>
        <taxon>Eukaryota</taxon>
        <taxon>Metazoa</taxon>
        <taxon>Chordata</taxon>
        <taxon>Craniata</taxon>
        <taxon>Vertebrata</taxon>
        <taxon>Euteleostomi</taxon>
        <taxon>Mammalia</taxon>
        <taxon>Eutheria</taxon>
        <taxon>Euarchontoglires</taxon>
        <taxon>Glires</taxon>
        <taxon>Rodentia</taxon>
        <taxon>Myomorpha</taxon>
        <taxon>Muroidea</taxon>
        <taxon>Muridae</taxon>
        <taxon>Murinae</taxon>
        <taxon>Rattus</taxon>
    </lineage>
</organism>
<protein>
    <recommendedName>
        <fullName>Vacuolar protein sorting-associated protein 28 homolog</fullName>
    </recommendedName>
</protein>
<gene>
    <name type="primary">Vps28</name>
</gene>
<proteinExistence type="evidence at transcript level"/>
<comment type="function">
    <text evidence="1">Component of the endosomal sorting complex required for transport-I (ESCRT-I) complex, a regulator of vesicular trafficking process. The ESCRT-I complex participates in the sorting of membrane proteins into vesicles that bud into late endosomal compartments called multivesicular bodies, and is also involved in the budding of many viruses.</text>
</comment>
<comment type="subunit">
    <text evidence="1">Component of the ESCRT-I complex (endosomal sorting complex required for transport I) which consists of TSG101, VPS28, a VPS37 protein (VPS37A to -D) and MVB12A or MVB12B in a 1:1:1:1 stoichiometry. Interacts with TSG101, VPS37B, VPS37C, MVB12A and MVB12B. Component of an ESCRT-I complex (endosomal sorting complex required for transport I) which consists of TSG101, VPS28, VPS37A and UBAP1 in a 1:1:1:1 stoichiometry. Interacts with VPS36; the interaction mediates the association with the ESCRT-II complex. Interacts with SNF8 and VPS25. Interacts with CEP55 (By similarity).</text>
</comment>
<comment type="subcellular location">
    <subcellularLocation>
        <location evidence="1">Cytoplasm</location>
    </subcellularLocation>
    <subcellularLocation>
        <location evidence="1">Endosome</location>
    </subcellularLocation>
    <subcellularLocation>
        <location evidence="1">Cell membrane</location>
    </subcellularLocation>
</comment>
<comment type="similarity">
    <text evidence="3 4">Belongs to the VPS28 family.</text>
</comment>
<feature type="chain" id="PRO_0000358932" description="Vacuolar protein sorting-associated protein 28 homolog">
    <location>
        <begin position="1"/>
        <end position="228"/>
    </location>
</feature>
<feature type="domain" description="VPS28 N-terminal" evidence="4">
    <location>
        <begin position="20"/>
        <end position="127"/>
    </location>
</feature>
<feature type="domain" description="VPS28 C-terminal" evidence="3">
    <location>
        <begin position="131"/>
        <end position="227"/>
    </location>
</feature>
<feature type="modified residue" description="N-acetylmethionine" evidence="2">
    <location>
        <position position="1"/>
    </location>
</feature>
<reference key="1">
    <citation type="journal article" date="2004" name="Genome Res.">
        <title>The status, quality, and expansion of the NIH full-length cDNA project: the Mammalian Gene Collection (MGC).</title>
        <authorList>
            <consortium name="The MGC Project Team"/>
        </authorList>
    </citation>
    <scope>NUCLEOTIDE SEQUENCE [LARGE SCALE MRNA]</scope>
    <source>
        <tissue>Pituitary</tissue>
    </source>
</reference>
<accession>B5DEN9</accession>
<evidence type="ECO:0000250" key="1"/>
<evidence type="ECO:0000250" key="2">
    <source>
        <dbReference type="UniProtKB" id="Q9UK41"/>
    </source>
</evidence>
<evidence type="ECO:0000255" key="3">
    <source>
        <dbReference type="PROSITE-ProRule" id="PRU00642"/>
    </source>
</evidence>
<evidence type="ECO:0000255" key="4">
    <source>
        <dbReference type="PROSITE-ProRule" id="PRU00645"/>
    </source>
</evidence>
<name>VPS28_RAT</name>
<dbReference type="EMBL" id="BC168742">
    <property type="protein sequence ID" value="AAI68742.1"/>
    <property type="molecule type" value="mRNA"/>
</dbReference>
<dbReference type="BMRB" id="B5DEN9"/>
<dbReference type="SMR" id="B5DEN9"/>
<dbReference type="FunCoup" id="B5DEN9">
    <property type="interactions" value="2855"/>
</dbReference>
<dbReference type="STRING" id="10116.ENSRNOP00000019707"/>
<dbReference type="GlyGen" id="B5DEN9">
    <property type="glycosylation" value="1 site"/>
</dbReference>
<dbReference type="PhosphoSitePlus" id="B5DEN9"/>
<dbReference type="jPOST" id="B5DEN9"/>
<dbReference type="PaxDb" id="10116-ENSRNOP00000019707"/>
<dbReference type="PeptideAtlas" id="B5DEN9"/>
<dbReference type="UCSC" id="RGD:1306537">
    <property type="organism name" value="rat"/>
</dbReference>
<dbReference type="AGR" id="RGD:1306537"/>
<dbReference type="RGD" id="1306537">
    <property type="gene designation" value="Vps28"/>
</dbReference>
<dbReference type="eggNOG" id="KOG3284">
    <property type="taxonomic scope" value="Eukaryota"/>
</dbReference>
<dbReference type="HOGENOM" id="CLU_076417_2_0_1"/>
<dbReference type="InParanoid" id="B5DEN9"/>
<dbReference type="PhylomeDB" id="B5DEN9"/>
<dbReference type="TreeFam" id="TF313364"/>
<dbReference type="Reactome" id="R-RNO-917729">
    <property type="pathway name" value="Endosomal Sorting Complex Required For Transport (ESCRT)"/>
</dbReference>
<dbReference type="PRO" id="PR:B5DEN9"/>
<dbReference type="Proteomes" id="UP000002494">
    <property type="component" value="Unplaced"/>
</dbReference>
<dbReference type="GO" id="GO:0005737">
    <property type="term" value="C:cytoplasm"/>
    <property type="evidence" value="ECO:0000250"/>
    <property type="project" value="UniProtKB"/>
</dbReference>
<dbReference type="GO" id="GO:0005829">
    <property type="term" value="C:cytosol"/>
    <property type="evidence" value="ECO:0000314"/>
    <property type="project" value="UniProtKB"/>
</dbReference>
<dbReference type="GO" id="GO:0005769">
    <property type="term" value="C:early endosome"/>
    <property type="evidence" value="ECO:0000266"/>
    <property type="project" value="RGD"/>
</dbReference>
<dbReference type="GO" id="GO:0005768">
    <property type="term" value="C:endosome"/>
    <property type="evidence" value="ECO:0000266"/>
    <property type="project" value="RGD"/>
</dbReference>
<dbReference type="GO" id="GO:0010008">
    <property type="term" value="C:endosome membrane"/>
    <property type="evidence" value="ECO:0000266"/>
    <property type="project" value="RGD"/>
</dbReference>
<dbReference type="GO" id="GO:0000813">
    <property type="term" value="C:ESCRT I complex"/>
    <property type="evidence" value="ECO:0000250"/>
    <property type="project" value="UniProtKB"/>
</dbReference>
<dbReference type="GO" id="GO:0005886">
    <property type="term" value="C:plasma membrane"/>
    <property type="evidence" value="ECO:0000266"/>
    <property type="project" value="RGD"/>
</dbReference>
<dbReference type="GO" id="GO:0044877">
    <property type="term" value="F:protein-containing complex binding"/>
    <property type="evidence" value="ECO:0000318"/>
    <property type="project" value="GO_Central"/>
</dbReference>
<dbReference type="GO" id="GO:0043130">
    <property type="term" value="F:ubiquitin binding"/>
    <property type="evidence" value="ECO:0000266"/>
    <property type="project" value="RGD"/>
</dbReference>
<dbReference type="GO" id="GO:0031397">
    <property type="term" value="P:negative regulation of protein ubiquitination"/>
    <property type="evidence" value="ECO:0000250"/>
    <property type="project" value="UniProtKB"/>
</dbReference>
<dbReference type="GO" id="GO:0045732">
    <property type="term" value="P:positive regulation of protein catabolic process"/>
    <property type="evidence" value="ECO:0000266"/>
    <property type="project" value="RGD"/>
</dbReference>
<dbReference type="GO" id="GO:2000397">
    <property type="term" value="P:positive regulation of ubiquitin-dependent endocytosis"/>
    <property type="evidence" value="ECO:0000266"/>
    <property type="project" value="RGD"/>
</dbReference>
<dbReference type="GO" id="GO:0043328">
    <property type="term" value="P:protein transport to vacuole involved in ubiquitin-dependent protein catabolic process via the multivesicular body sorting pathway"/>
    <property type="evidence" value="ECO:0000318"/>
    <property type="project" value="GO_Central"/>
</dbReference>
<dbReference type="GO" id="GO:0043162">
    <property type="term" value="P:ubiquitin-dependent protein catabolic process via the multivesicular body sorting pathway"/>
    <property type="evidence" value="ECO:0000250"/>
    <property type="project" value="UniProtKB"/>
</dbReference>
<dbReference type="FunFam" id="1.20.120.1130:FF:000001">
    <property type="entry name" value="Vacuolar protein sorting-associated protein 28 homolog"/>
    <property type="match status" value="1"/>
</dbReference>
<dbReference type="FunFam" id="1.20.1440.200:FF:000001">
    <property type="entry name" value="Vacuolar protein sorting-associated protein 28 homolog"/>
    <property type="match status" value="1"/>
</dbReference>
<dbReference type="Gene3D" id="1.20.120.1130">
    <property type="match status" value="1"/>
</dbReference>
<dbReference type="Gene3D" id="1.20.1440.200">
    <property type="match status" value="1"/>
</dbReference>
<dbReference type="InterPro" id="IPR037202">
    <property type="entry name" value="ESCRT_assembly_dom"/>
</dbReference>
<dbReference type="InterPro" id="IPR007143">
    <property type="entry name" value="Vps28"/>
</dbReference>
<dbReference type="InterPro" id="IPR017899">
    <property type="entry name" value="VPS28_C"/>
</dbReference>
<dbReference type="InterPro" id="IPR037206">
    <property type="entry name" value="VPS28_C_sf"/>
</dbReference>
<dbReference type="InterPro" id="IPR017898">
    <property type="entry name" value="VPS28_N"/>
</dbReference>
<dbReference type="InterPro" id="IPR038358">
    <property type="entry name" value="VPS28_N_sf"/>
</dbReference>
<dbReference type="PANTHER" id="PTHR12937">
    <property type="entry name" value="VACUOLAR PROTEIN SORTING 28, ISOFORM 2 VPS28"/>
    <property type="match status" value="1"/>
</dbReference>
<dbReference type="PANTHER" id="PTHR12937:SF0">
    <property type="entry name" value="VACUOLAR PROTEIN SORTING-ASSOCIATED PROTEIN 28 HOMOLOG"/>
    <property type="match status" value="1"/>
</dbReference>
<dbReference type="Pfam" id="PF03997">
    <property type="entry name" value="VPS28"/>
    <property type="match status" value="1"/>
</dbReference>
<dbReference type="PIRSF" id="PIRSF017535">
    <property type="entry name" value="VPS28"/>
    <property type="match status" value="1"/>
</dbReference>
<dbReference type="SUPFAM" id="SSF140111">
    <property type="entry name" value="Endosomal sorting complex assembly domain"/>
    <property type="match status" value="1"/>
</dbReference>
<dbReference type="SUPFAM" id="SSF140427">
    <property type="entry name" value="VPS28 C-terminal domain-like"/>
    <property type="match status" value="1"/>
</dbReference>
<dbReference type="PROSITE" id="PS51310">
    <property type="entry name" value="VPS28_C"/>
    <property type="match status" value="1"/>
</dbReference>
<dbReference type="PROSITE" id="PS51313">
    <property type="entry name" value="VPS28_N"/>
    <property type="match status" value="1"/>
</dbReference>
<keyword id="KW-0007">Acetylation</keyword>
<keyword id="KW-1003">Cell membrane</keyword>
<keyword id="KW-0963">Cytoplasm</keyword>
<keyword id="KW-0967">Endosome</keyword>
<keyword id="KW-0472">Membrane</keyword>
<keyword id="KW-0653">Protein transport</keyword>
<keyword id="KW-1185">Reference proteome</keyword>
<keyword id="KW-0813">Transport</keyword>